<comment type="function">
    <text evidence="1">One of the components of the core complex of photosystem II (PSII). It binds chlorophyll and helps catalyze the primary light-induced photochemical processes of PSII. PSII is a light-driven water:plastoquinone oxidoreductase, using light energy to abstract electrons from H(2)O, generating O(2) and a proton gradient subsequently used for ATP formation.</text>
</comment>
<comment type="cofactor">
    <text evidence="1">Binds multiple chlorophylls. PSII binds additional chlorophylls, carotenoids and specific lipids.</text>
</comment>
<comment type="subunit">
    <text evidence="1">PSII is composed of 1 copy each of membrane proteins PsbA, PsbB, PsbC, PsbD, PsbE, PsbF, PsbH, PsbI, PsbJ, PsbK, PsbL, PsbM, PsbT, PsbX, PsbY, PsbZ, Psb30/Ycf12, at least 3 peripheral proteins of the oxygen-evolving complex and a large number of cofactors. It forms dimeric complexes.</text>
</comment>
<comment type="subcellular location">
    <subcellularLocation>
        <location evidence="1">Plastid</location>
        <location evidence="1">Chloroplast thylakoid membrane</location>
        <topology evidence="1">Multi-pass membrane protein</topology>
    </subcellularLocation>
</comment>
<comment type="similarity">
    <text evidence="1">Belongs to the PsbB/PsbC family. PsbB subfamily.</text>
</comment>
<evidence type="ECO:0000255" key="1">
    <source>
        <dbReference type="HAMAP-Rule" id="MF_01495"/>
    </source>
</evidence>
<keyword id="KW-0148">Chlorophyll</keyword>
<keyword id="KW-0150">Chloroplast</keyword>
<keyword id="KW-0157">Chromophore</keyword>
<keyword id="KW-0472">Membrane</keyword>
<keyword id="KW-0602">Photosynthesis</keyword>
<keyword id="KW-0604">Photosystem II</keyword>
<keyword id="KW-0934">Plastid</keyword>
<keyword id="KW-0793">Thylakoid</keyword>
<keyword id="KW-0812">Transmembrane</keyword>
<keyword id="KW-1133">Transmembrane helix</keyword>
<proteinExistence type="inferred from homology"/>
<gene>
    <name evidence="1" type="primary">psbB</name>
</gene>
<sequence>MGLPWYRVHTVVLNDPGRLLSVHIMHTALVSGWAGSMALYELAVFDPSDPVLDPMWRQGMFVIPFMTRLGITNSWGGWSITGGTITNPGIWSYEGVAGAHIVFSGLCFLAAIWHWVYWDLEIFCDERTGKPSLDLPKIFGIHLFLSGVTCFGFGAFHVTGLYGPGIWVSDPYGLTGKVQSVNPAWGTEGFDPFVPGGIASHHIAAGTLGILAGLFHLSVRPPQRLYKGLRMGNIETVLSSSIAAVFFAAFVVAGTMWYGSATTPIELFGPTRYQWDQGYFQQEIYRRVGAGLAENLSLSEAWSKIPEKLAFYDYIGNNPAKGGLFRAGSMDNGDGIAVGWLGHPIFRDKEGHELFVRRMPTFFETFPVVLVDGDGIVRADVPFRRAESKYSVEQVGVTVEFYGGELNGVSYGDPATVKKYARRAQLGEIFELDRATLKSDGVFRSSPRGWFTFGHATFALLFFFGHIWHGARTLFRDVFAGIDPDLDAQVEFGTFQKLGDPTTRRQVV</sequence>
<protein>
    <recommendedName>
        <fullName evidence="1">Photosystem II CP47 reaction center protein</fullName>
    </recommendedName>
    <alternativeName>
        <fullName evidence="1">PSII 47 kDa protein</fullName>
    </alternativeName>
    <alternativeName>
        <fullName evidence="1">Protein CP-47</fullName>
    </alternativeName>
</protein>
<accession>Q06GX1</accession>
<name>PSBB_DRIGR</name>
<organism>
    <name type="scientific">Drimys granadensis</name>
    <dbReference type="NCBI Taxonomy" id="224735"/>
    <lineage>
        <taxon>Eukaryota</taxon>
        <taxon>Viridiplantae</taxon>
        <taxon>Streptophyta</taxon>
        <taxon>Embryophyta</taxon>
        <taxon>Tracheophyta</taxon>
        <taxon>Spermatophyta</taxon>
        <taxon>Magnoliopsida</taxon>
        <taxon>Magnoliidae</taxon>
        <taxon>Canellales</taxon>
        <taxon>Winteraceae</taxon>
        <taxon>Drimys</taxon>
    </lineage>
</organism>
<geneLocation type="chloroplast"/>
<dbReference type="EMBL" id="DQ887676">
    <property type="protein sequence ID" value="ABH88322.1"/>
    <property type="molecule type" value="Genomic_DNA"/>
</dbReference>
<dbReference type="RefSeq" id="YP_784412.1">
    <property type="nucleotide sequence ID" value="NC_008456.1"/>
</dbReference>
<dbReference type="SMR" id="Q06GX1"/>
<dbReference type="GeneID" id="4363598"/>
<dbReference type="GO" id="GO:0009535">
    <property type="term" value="C:chloroplast thylakoid membrane"/>
    <property type="evidence" value="ECO:0007669"/>
    <property type="project" value="UniProtKB-SubCell"/>
</dbReference>
<dbReference type="GO" id="GO:0009523">
    <property type="term" value="C:photosystem II"/>
    <property type="evidence" value="ECO:0007669"/>
    <property type="project" value="UniProtKB-KW"/>
</dbReference>
<dbReference type="GO" id="GO:0016168">
    <property type="term" value="F:chlorophyll binding"/>
    <property type="evidence" value="ECO:0007669"/>
    <property type="project" value="UniProtKB-UniRule"/>
</dbReference>
<dbReference type="GO" id="GO:0045156">
    <property type="term" value="F:electron transporter, transferring electrons within the cyclic electron transport pathway of photosynthesis activity"/>
    <property type="evidence" value="ECO:0007669"/>
    <property type="project" value="InterPro"/>
</dbReference>
<dbReference type="GO" id="GO:0009772">
    <property type="term" value="P:photosynthetic electron transport in photosystem II"/>
    <property type="evidence" value="ECO:0007669"/>
    <property type="project" value="InterPro"/>
</dbReference>
<dbReference type="FunFam" id="3.10.680.10:FF:000001">
    <property type="entry name" value="Photosystem II CP47 reaction center protein"/>
    <property type="match status" value="1"/>
</dbReference>
<dbReference type="Gene3D" id="3.10.680.10">
    <property type="entry name" value="Photosystem II CP47 reaction center protein"/>
    <property type="match status" value="1"/>
</dbReference>
<dbReference type="HAMAP" id="MF_01495">
    <property type="entry name" value="PSII_PsbB_CP47"/>
    <property type="match status" value="1"/>
</dbReference>
<dbReference type="InterPro" id="IPR000932">
    <property type="entry name" value="PS_antenna-like"/>
</dbReference>
<dbReference type="InterPro" id="IPR036001">
    <property type="entry name" value="PS_II_antenna-like_sf"/>
</dbReference>
<dbReference type="InterPro" id="IPR017486">
    <property type="entry name" value="PSII_PsbB"/>
</dbReference>
<dbReference type="NCBIfam" id="TIGR03039">
    <property type="entry name" value="PS_II_CP47"/>
    <property type="match status" value="1"/>
</dbReference>
<dbReference type="PANTHER" id="PTHR33180">
    <property type="entry name" value="PHOTOSYSTEM II CP43 REACTION CENTER PROTEIN"/>
    <property type="match status" value="1"/>
</dbReference>
<dbReference type="PANTHER" id="PTHR33180:SF37">
    <property type="entry name" value="PHOTOSYSTEM II CP43 REACTION CENTER PROTEIN"/>
    <property type="match status" value="1"/>
</dbReference>
<dbReference type="Pfam" id="PF00421">
    <property type="entry name" value="PSII"/>
    <property type="match status" value="1"/>
</dbReference>
<dbReference type="SUPFAM" id="SSF161077">
    <property type="entry name" value="Photosystem II antenna protein-like"/>
    <property type="match status" value="1"/>
</dbReference>
<reference key="1">
    <citation type="journal article" date="2006" name="BMC Evol. Biol.">
        <title>Complete plastid genome sequences of Drimys, Liriodendron, and Piper: implications for the phylogenetic relationships of magnoliids.</title>
        <authorList>
            <person name="Cai Z."/>
            <person name="Penaflor C."/>
            <person name="Kuehl J.V."/>
            <person name="Leebens-Mack J."/>
            <person name="Carlson J.E."/>
            <person name="dePamphilis C.W."/>
            <person name="Boore J.L."/>
            <person name="Jansen R.K."/>
        </authorList>
    </citation>
    <scope>NUCLEOTIDE SEQUENCE [LARGE SCALE GENOMIC DNA]</scope>
</reference>
<feature type="chain" id="PRO_0000359821" description="Photosystem II CP47 reaction center protein">
    <location>
        <begin position="1"/>
        <end position="508"/>
    </location>
</feature>
<feature type="transmembrane region" description="Helical" evidence="1">
    <location>
        <begin position="21"/>
        <end position="36"/>
    </location>
</feature>
<feature type="transmembrane region" description="Helical" evidence="1">
    <location>
        <begin position="101"/>
        <end position="115"/>
    </location>
</feature>
<feature type="transmembrane region" description="Helical" evidence="1">
    <location>
        <begin position="140"/>
        <end position="156"/>
    </location>
</feature>
<feature type="transmembrane region" description="Helical" evidence="1">
    <location>
        <begin position="203"/>
        <end position="218"/>
    </location>
</feature>
<feature type="transmembrane region" description="Helical" evidence="1">
    <location>
        <begin position="237"/>
        <end position="252"/>
    </location>
</feature>
<feature type="transmembrane region" description="Helical" evidence="1">
    <location>
        <begin position="457"/>
        <end position="472"/>
    </location>
</feature>